<sequence length="91" mass="10594">MSITTERKQQLIKEYAITENDTGSSAVQCAILTERINNLTEHFKSNHKDHTSRRGLLILVGRRRRLLNYIKKNNVSKYLDLISKLGIRKIK</sequence>
<gene>
    <name evidence="1" type="primary">rpsO</name>
    <name type="ordered locus">RrIowa_0794</name>
</gene>
<proteinExistence type="inferred from homology"/>
<keyword id="KW-0687">Ribonucleoprotein</keyword>
<keyword id="KW-0689">Ribosomal protein</keyword>
<keyword id="KW-0694">RNA-binding</keyword>
<keyword id="KW-0699">rRNA-binding</keyword>
<evidence type="ECO:0000255" key="1">
    <source>
        <dbReference type="HAMAP-Rule" id="MF_01343"/>
    </source>
</evidence>
<evidence type="ECO:0000305" key="2"/>
<dbReference type="EMBL" id="CP000766">
    <property type="protein sequence ID" value="ABY72637.1"/>
    <property type="molecule type" value="Genomic_DNA"/>
</dbReference>
<dbReference type="RefSeq" id="WP_004995678.1">
    <property type="nucleotide sequence ID" value="NC_010263.3"/>
</dbReference>
<dbReference type="SMR" id="B0BXR1"/>
<dbReference type="GeneID" id="95362261"/>
<dbReference type="KEGG" id="rrj:RrIowa_0794"/>
<dbReference type="eggNOG" id="COG0184">
    <property type="taxonomic scope" value="Bacteria"/>
</dbReference>
<dbReference type="HOGENOM" id="CLU_148518_0_0_5"/>
<dbReference type="Proteomes" id="UP000000796">
    <property type="component" value="Chromosome"/>
</dbReference>
<dbReference type="GO" id="GO:0022627">
    <property type="term" value="C:cytosolic small ribosomal subunit"/>
    <property type="evidence" value="ECO:0007669"/>
    <property type="project" value="TreeGrafter"/>
</dbReference>
<dbReference type="GO" id="GO:0019843">
    <property type="term" value="F:rRNA binding"/>
    <property type="evidence" value="ECO:0007669"/>
    <property type="project" value="UniProtKB-UniRule"/>
</dbReference>
<dbReference type="GO" id="GO:0003735">
    <property type="term" value="F:structural constituent of ribosome"/>
    <property type="evidence" value="ECO:0007669"/>
    <property type="project" value="InterPro"/>
</dbReference>
<dbReference type="GO" id="GO:0006412">
    <property type="term" value="P:translation"/>
    <property type="evidence" value="ECO:0007669"/>
    <property type="project" value="UniProtKB-UniRule"/>
</dbReference>
<dbReference type="CDD" id="cd00353">
    <property type="entry name" value="Ribosomal_S15p_S13e"/>
    <property type="match status" value="1"/>
</dbReference>
<dbReference type="FunFam" id="1.10.287.10:FF:000002">
    <property type="entry name" value="30S ribosomal protein S15"/>
    <property type="match status" value="1"/>
</dbReference>
<dbReference type="Gene3D" id="6.10.250.3130">
    <property type="match status" value="1"/>
</dbReference>
<dbReference type="Gene3D" id="1.10.287.10">
    <property type="entry name" value="S15/NS1, RNA-binding"/>
    <property type="match status" value="1"/>
</dbReference>
<dbReference type="HAMAP" id="MF_01343_B">
    <property type="entry name" value="Ribosomal_uS15_B"/>
    <property type="match status" value="1"/>
</dbReference>
<dbReference type="InterPro" id="IPR000589">
    <property type="entry name" value="Ribosomal_uS15"/>
</dbReference>
<dbReference type="InterPro" id="IPR005290">
    <property type="entry name" value="Ribosomal_uS15_bac-type"/>
</dbReference>
<dbReference type="InterPro" id="IPR009068">
    <property type="entry name" value="uS15_NS1_RNA-bd_sf"/>
</dbReference>
<dbReference type="NCBIfam" id="TIGR00952">
    <property type="entry name" value="S15_bact"/>
    <property type="match status" value="1"/>
</dbReference>
<dbReference type="PANTHER" id="PTHR23321">
    <property type="entry name" value="RIBOSOMAL PROTEIN S15, BACTERIAL AND ORGANELLAR"/>
    <property type="match status" value="1"/>
</dbReference>
<dbReference type="PANTHER" id="PTHR23321:SF26">
    <property type="entry name" value="SMALL RIBOSOMAL SUBUNIT PROTEIN US15M"/>
    <property type="match status" value="1"/>
</dbReference>
<dbReference type="Pfam" id="PF00312">
    <property type="entry name" value="Ribosomal_S15"/>
    <property type="match status" value="1"/>
</dbReference>
<dbReference type="SMART" id="SM01387">
    <property type="entry name" value="Ribosomal_S15"/>
    <property type="match status" value="1"/>
</dbReference>
<dbReference type="SUPFAM" id="SSF47060">
    <property type="entry name" value="S15/NS1 RNA-binding domain"/>
    <property type="match status" value="1"/>
</dbReference>
<dbReference type="PROSITE" id="PS00362">
    <property type="entry name" value="RIBOSOMAL_S15"/>
    <property type="match status" value="1"/>
</dbReference>
<accession>B0BXR1</accession>
<organism>
    <name type="scientific">Rickettsia rickettsii (strain Iowa)</name>
    <dbReference type="NCBI Taxonomy" id="452659"/>
    <lineage>
        <taxon>Bacteria</taxon>
        <taxon>Pseudomonadati</taxon>
        <taxon>Pseudomonadota</taxon>
        <taxon>Alphaproteobacteria</taxon>
        <taxon>Rickettsiales</taxon>
        <taxon>Rickettsiaceae</taxon>
        <taxon>Rickettsieae</taxon>
        <taxon>Rickettsia</taxon>
        <taxon>spotted fever group</taxon>
    </lineage>
</organism>
<reference key="1">
    <citation type="journal article" date="2008" name="Infect. Immun.">
        <title>Genomic comparison of virulent Rickettsia rickettsii Sheila Smith and avirulent Rickettsia rickettsii Iowa.</title>
        <authorList>
            <person name="Ellison D.W."/>
            <person name="Clark T.R."/>
            <person name="Sturdevant D.E."/>
            <person name="Virtaneva K."/>
            <person name="Porcella S.F."/>
            <person name="Hackstadt T."/>
        </authorList>
    </citation>
    <scope>NUCLEOTIDE SEQUENCE [LARGE SCALE GENOMIC DNA]</scope>
    <source>
        <strain>Iowa</strain>
    </source>
</reference>
<name>RS15_RICRO</name>
<feature type="chain" id="PRO_1000086814" description="Small ribosomal subunit protein uS15">
    <location>
        <begin position="1"/>
        <end position="91"/>
    </location>
</feature>
<comment type="function">
    <text evidence="1">One of the primary rRNA binding proteins, it binds directly to 16S rRNA where it helps nucleate assembly of the platform of the 30S subunit by binding and bridging several RNA helices of the 16S rRNA.</text>
</comment>
<comment type="function">
    <text evidence="1">Forms an intersubunit bridge (bridge B4) with the 23S rRNA of the 50S subunit in the ribosome.</text>
</comment>
<comment type="subunit">
    <text evidence="1">Part of the 30S ribosomal subunit. Forms a bridge to the 50S subunit in the 70S ribosome, contacting the 23S rRNA.</text>
</comment>
<comment type="similarity">
    <text evidence="1">Belongs to the universal ribosomal protein uS15 family.</text>
</comment>
<protein>
    <recommendedName>
        <fullName evidence="1">Small ribosomal subunit protein uS15</fullName>
    </recommendedName>
    <alternativeName>
        <fullName evidence="2">30S ribosomal protein S15</fullName>
    </alternativeName>
</protein>